<evidence type="ECO:0000255" key="1">
    <source>
        <dbReference type="HAMAP-Rule" id="MF_04043"/>
    </source>
</evidence>
<evidence type="ECO:0000256" key="2">
    <source>
        <dbReference type="SAM" id="MobiDB-lite"/>
    </source>
</evidence>
<evidence type="ECO:0000305" key="3"/>
<reference key="1">
    <citation type="journal article" date="1990" name="Curr. Top. Microbiol. Immunol.">
        <title>Analysis of the protein-coding content of the sequence of human cytomegalovirus strain AD169.</title>
        <authorList>
            <person name="Chee M.S."/>
            <person name="Bankier A.T."/>
            <person name="Beck S."/>
            <person name="Bohni R."/>
            <person name="Brown C.M."/>
            <person name="Cerny R."/>
            <person name="Horsnell T."/>
            <person name="Hutchison C.A. III"/>
            <person name="Kouzarides T."/>
            <person name="Martignetti J.A."/>
            <person name="Preddie E."/>
            <person name="Satchwell S.C."/>
            <person name="Tomlinson P."/>
            <person name="Weston K.M."/>
            <person name="Barrell B.G."/>
        </authorList>
    </citation>
    <scope>NUCLEOTIDE SEQUENCE [LARGE SCALE GENOMIC DNA]</scope>
</reference>
<reference key="2">
    <citation type="journal article" date="2003" name="J. Gen. Virol.">
        <title>The human cytomegalovirus genome revisited: comparison with the chimpanzee cytomegalovirus genome.</title>
        <authorList>
            <person name="Davison A.J."/>
            <person name="Dolan A."/>
            <person name="Akter P."/>
            <person name="Addison C."/>
            <person name="Dargan D.J."/>
            <person name="Alcendor D.J."/>
            <person name="McGeoch D.J."/>
            <person name="Hayward G.S."/>
        </authorList>
    </citation>
    <scope>GENOME REANNOTATION</scope>
</reference>
<reference key="3">
    <citation type="journal article" date="2003" name="J. Gen. Virol.">
        <authorList>
            <person name="Davison A.J."/>
            <person name="Dolan A."/>
            <person name="Akter P."/>
            <person name="Addison C."/>
            <person name="Dargan D.J."/>
            <person name="Alcendor D.J."/>
            <person name="McGeoch D.J."/>
            <person name="Hayward G.S."/>
        </authorList>
    </citation>
    <scope>ERRATUM OF PUBMED:12533697</scope>
</reference>
<reference key="4">
    <citation type="journal article" date="2004" name="J. Virol.">
        <title>Identification of proteins in human cytomegalovirus (HCMV) particles: the HCMV proteome.</title>
        <authorList>
            <person name="Varnum S.M."/>
            <person name="Streblow D.N."/>
            <person name="Monroe M.E."/>
            <person name="Smith P."/>
            <person name="Auberry K.J."/>
            <person name="Pasa-Tolic L."/>
            <person name="Wang D."/>
            <person name="Camp D.G. II"/>
            <person name="Rodland K."/>
            <person name="Wiley S."/>
            <person name="Britt W."/>
            <person name="Shenk T."/>
            <person name="Smith R.D."/>
            <person name="Nelson J.A."/>
        </authorList>
    </citation>
    <scope>IDENTIFICATION</scope>
</reference>
<reference key="5">
    <citation type="journal article" date="2004" name="J. Virol.">
        <authorList>
            <person name="Varnum S.M."/>
            <person name="Streblow D.N."/>
            <person name="Monroe M.E."/>
            <person name="Smith P."/>
            <person name="Auberry K.J."/>
            <person name="Pasa-Tolic L."/>
            <person name="Wang D."/>
            <person name="Camp D.G. II"/>
            <person name="Rodland K."/>
            <person name="Wiley S."/>
            <person name="Britt W."/>
            <person name="Shenk T."/>
            <person name="Smith R.D."/>
            <person name="Nelson J.A."/>
        </authorList>
    </citation>
    <scope>ERRATUM OF PUBMED:15452216</scope>
</reference>
<feature type="chain" id="PRO_0000116053" description="Inner tegument protein">
    <location>
        <begin position="1"/>
        <end position="983"/>
    </location>
</feature>
<feature type="region of interest" description="Interaction with large tegument protein" evidence="1">
    <location>
        <begin position="474"/>
        <end position="983"/>
    </location>
</feature>
<feature type="region of interest" description="Disordered" evidence="2">
    <location>
        <begin position="901"/>
        <end position="932"/>
    </location>
</feature>
<feature type="compositionally biased region" description="Basic and acidic residues" evidence="2">
    <location>
        <begin position="914"/>
        <end position="923"/>
    </location>
</feature>
<name>ITP_HCMVA</name>
<sequence length="983" mass="110092">MMARRTVDFKKLIEQLRARATDKAEALNTVSQLEIGAVDAQDVTASAVRAFVGALPSSGYHFGFVRQNVVFYLLSHATVQTARDPLYAAEQLHEQLDRFLRHQHDGGGDEDRLPFYHNGATLTAFQKLLQTLREIQTVIAEQSGGTAAAADLIASNNASTERRGKKGGSSSGGQQPLVRRVITQLETAATEARPYVNCRAVAELLDLTYQRLIYWACTLMPYVLFRRDTDTELDTVLLMHFFYTHYRSVNGDLAVEFQNYVKNSVRHMSSFVSSDIDGDQKPGAEHMRDVSYKLFVGNLQARDASGLMFPIISTRISTVNLYLSPERMFFHPGLISRLLSEEVSPRANLDAYARVCDRVLEDHLHTPRRVQRLLDLTQMVMRLVELGFNHDTCAAYAQMALIQPASQKSSLFVSEIREKLIQIIYNFYTFFMCLYVYSPTFLFDHRRRLILEQHRSTLIGSKEELQHVWSNVTLNVNTHFAVQYTEEDFEAHTKGATEAEREYLYRDLHSKWGVHLFTLRPSRGAAGAASPLPPLDGVTRSDILRECALVNLNEGRVNYASLLAFSHHPEFPSIFAQLVVVTEFSEIFGIPQGLFQAVGSPRLFALIQLCRVLLPEQVTLYQNLVSIYNLTTFVKHIDAAVFKTVRDCVFDIATTLEHLSGVPVTPNVDLLAELMARSVAHNLYTTVNPLIEDVMRSSAGSLRNYLRHTRLCFGLARGRARLSEDGVTVYVEVQGQYGLRVPTTRFVEQLRELVRRDRLLAENLRGLNERLLSVRVRVRQISSDTEEVSRHAKGHRTVAQMSKALKKTASKIKVLETRVTLALEQAQRSNGAVVTAVQRALAVFDVLSRENLERRGAQLCLTEATSLLHRHRALAPMTWPAGTGVAAAAEADRALREFLEAPWESAPQPPRLRMTPDTDHEESTAGATSVPEVLGARYEPAHLAASDLLNWYIVPVSQAQQDILSSIDPPAGSTSVSLPPASP</sequence>
<keyword id="KW-0002">3D-structure</keyword>
<keyword id="KW-1035">Host cytoplasm</keyword>
<keyword id="KW-1040">Host Golgi apparatus</keyword>
<keyword id="KW-1048">Host nucleus</keyword>
<keyword id="KW-1185">Reference proteome</keyword>
<keyword id="KW-0946">Virion</keyword>
<keyword id="KW-0920">Virion tegument</keyword>
<proteinExistence type="evidence at protein level"/>
<dbReference type="EMBL" id="X17403">
    <property type="protein sequence ID" value="CAA35406.1"/>
    <property type="status" value="ALT_INIT"/>
    <property type="molecule type" value="Genomic_DNA"/>
</dbReference>
<dbReference type="EMBL" id="BK000394">
    <property type="protein sequence ID" value="DAA00150.1"/>
    <property type="molecule type" value="Genomic_DNA"/>
</dbReference>
<dbReference type="PIR" id="S09810">
    <property type="entry name" value="S09810"/>
</dbReference>
<dbReference type="PDB" id="8QLN">
    <property type="method" value="X-ray"/>
    <property type="resolution" value="2.51 A"/>
    <property type="chains" value="A=6-519"/>
</dbReference>
<dbReference type="PDB" id="8TEP">
    <property type="method" value="EM"/>
    <property type="resolution" value="3.50 A"/>
    <property type="chains" value="B/D=1-983"/>
</dbReference>
<dbReference type="PDBsum" id="8QLN"/>
<dbReference type="PDBsum" id="8TEP"/>
<dbReference type="EMDB" id="EMD-41194"/>
<dbReference type="SMR" id="P16784"/>
<dbReference type="Proteomes" id="UP000008991">
    <property type="component" value="Segment"/>
</dbReference>
<dbReference type="Proteomes" id="UP000008992">
    <property type="component" value="Segment"/>
</dbReference>
<dbReference type="GO" id="GO:0044177">
    <property type="term" value="C:host cell Golgi apparatus"/>
    <property type="evidence" value="ECO:0007669"/>
    <property type="project" value="UniProtKB-SubCell"/>
</dbReference>
<dbReference type="GO" id="GO:0042025">
    <property type="term" value="C:host cell nucleus"/>
    <property type="evidence" value="ECO:0007669"/>
    <property type="project" value="UniProtKB-SubCell"/>
</dbReference>
<dbReference type="GO" id="GO:0019033">
    <property type="term" value="C:viral tegument"/>
    <property type="evidence" value="ECO:0007669"/>
    <property type="project" value="UniProtKB-SubCell"/>
</dbReference>
<dbReference type="GO" id="GO:0019068">
    <property type="term" value="P:virion assembly"/>
    <property type="evidence" value="ECO:0007669"/>
    <property type="project" value="InterPro"/>
</dbReference>
<dbReference type="HAMAP" id="MF_04043">
    <property type="entry name" value="HSV_ITP"/>
    <property type="match status" value="1"/>
</dbReference>
<dbReference type="InterPro" id="IPR007611">
    <property type="entry name" value="Herpes_U30"/>
</dbReference>
<dbReference type="InterPro" id="IPR034738">
    <property type="entry name" value="HSV_ITP"/>
</dbReference>
<dbReference type="Pfam" id="PF04523">
    <property type="entry name" value="Herpes_U30"/>
    <property type="match status" value="1"/>
</dbReference>
<gene>
    <name type="primary">UL47</name>
</gene>
<protein>
    <recommendedName>
        <fullName evidence="1">Inner tegument protein</fullName>
    </recommendedName>
</protein>
<organismHost>
    <name type="scientific">Homo sapiens</name>
    <name type="common">Human</name>
    <dbReference type="NCBI Taxonomy" id="9606"/>
</organismHost>
<organism>
    <name type="scientific">Human cytomegalovirus (strain AD169)</name>
    <name type="common">HHV-5</name>
    <name type="synonym">Human herpesvirus 5</name>
    <dbReference type="NCBI Taxonomy" id="10360"/>
    <lineage>
        <taxon>Viruses</taxon>
        <taxon>Duplodnaviria</taxon>
        <taxon>Heunggongvirae</taxon>
        <taxon>Peploviricota</taxon>
        <taxon>Herviviricetes</taxon>
        <taxon>Herpesvirales</taxon>
        <taxon>Orthoherpesviridae</taxon>
        <taxon>Betaherpesvirinae</taxon>
        <taxon>Cytomegalovirus</taxon>
        <taxon>Cytomegalovirus humanbeta5</taxon>
        <taxon>Human cytomegalovirus</taxon>
    </lineage>
</organism>
<accession>P16784</accession>
<accession>Q7M6N8</accession>
<comment type="function">
    <text evidence="1">Plays an essential role in cytoplasmic secondary envelopment during viral egress. Interacts with the capsid via the large tegument protein/LTP and participates in its transport to the host trans-Golgi network (TGN) where secondary envelopment occurs. Modulates tegumentation and capsid accumulation at the viral assembly complex.</text>
</comment>
<comment type="subunit">
    <text evidence="1">Interacts (via C-terminus) with the large tegument protein/LTP (via N-terminus).</text>
</comment>
<comment type="subcellular location">
    <subcellularLocation>
        <location evidence="1">Virion tegument</location>
    </subcellularLocation>
    <subcellularLocation>
        <location evidence="1">Host cytoplasm</location>
    </subcellularLocation>
    <subcellularLocation>
        <location evidence="1">Host nucleus</location>
    </subcellularLocation>
    <subcellularLocation>
        <location evidence="1">Host Golgi apparatus</location>
        <location evidence="1">Host trans-Golgi network</location>
    </subcellularLocation>
</comment>
<comment type="similarity">
    <text evidence="1">Belongs to the herpesviridae inner tegument protein family.</text>
</comment>
<comment type="sequence caution" evidence="3">
    <conflict type="erroneous initiation">
        <sequence resource="EMBL-CDS" id="CAA35406"/>
    </conflict>
</comment>